<evidence type="ECO:0000255" key="1">
    <source>
        <dbReference type="HAMAP-Rule" id="MF_00692"/>
    </source>
</evidence>
<gene>
    <name evidence="1" type="primary">ydiU</name>
    <name evidence="1" type="synonym">selO</name>
    <name type="ordered locus">SO_0330</name>
</gene>
<name>SELO_SHEON</name>
<feature type="chain" id="PRO_0000121428" description="Protein nucleotidyltransferase YdiU">
    <location>
        <begin position="1"/>
        <end position="484"/>
    </location>
</feature>
<feature type="active site" description="Proton acceptor" evidence="1">
    <location>
        <position position="244"/>
    </location>
</feature>
<feature type="binding site" evidence="1">
    <location>
        <position position="81"/>
    </location>
    <ligand>
        <name>ATP</name>
        <dbReference type="ChEBI" id="CHEBI:30616"/>
    </ligand>
</feature>
<feature type="binding site" evidence="1">
    <location>
        <position position="83"/>
    </location>
    <ligand>
        <name>ATP</name>
        <dbReference type="ChEBI" id="CHEBI:30616"/>
    </ligand>
</feature>
<feature type="binding site" evidence="1">
    <location>
        <position position="84"/>
    </location>
    <ligand>
        <name>ATP</name>
        <dbReference type="ChEBI" id="CHEBI:30616"/>
    </ligand>
</feature>
<feature type="binding site" evidence="1">
    <location>
        <position position="103"/>
    </location>
    <ligand>
        <name>ATP</name>
        <dbReference type="ChEBI" id="CHEBI:30616"/>
    </ligand>
</feature>
<feature type="binding site" evidence="1">
    <location>
        <position position="115"/>
    </location>
    <ligand>
        <name>ATP</name>
        <dbReference type="ChEBI" id="CHEBI:30616"/>
    </ligand>
</feature>
<feature type="binding site" evidence="1">
    <location>
        <position position="116"/>
    </location>
    <ligand>
        <name>ATP</name>
        <dbReference type="ChEBI" id="CHEBI:30616"/>
    </ligand>
</feature>
<feature type="binding site" evidence="1">
    <location>
        <position position="166"/>
    </location>
    <ligand>
        <name>ATP</name>
        <dbReference type="ChEBI" id="CHEBI:30616"/>
    </ligand>
</feature>
<feature type="binding site" evidence="1">
    <location>
        <position position="173"/>
    </location>
    <ligand>
        <name>ATP</name>
        <dbReference type="ChEBI" id="CHEBI:30616"/>
    </ligand>
</feature>
<feature type="binding site" evidence="1">
    <location>
        <position position="245"/>
    </location>
    <ligand>
        <name>Mg(2+)</name>
        <dbReference type="ChEBI" id="CHEBI:18420"/>
    </ligand>
</feature>
<feature type="binding site" evidence="1">
    <location>
        <position position="254"/>
    </location>
    <ligand>
        <name>ATP</name>
        <dbReference type="ChEBI" id="CHEBI:30616"/>
    </ligand>
</feature>
<feature type="binding site" evidence="1">
    <location>
        <position position="254"/>
    </location>
    <ligand>
        <name>Mg(2+)</name>
        <dbReference type="ChEBI" id="CHEBI:18420"/>
    </ligand>
</feature>
<comment type="function">
    <text evidence="1">Nucleotidyltransferase involved in the post-translational modification of proteins. It can catalyze the addition of adenosine monophosphate (AMP) or uridine monophosphate (UMP) to a protein, resulting in modifications known as AMPylation and UMPylation.</text>
</comment>
<comment type="catalytic activity">
    <reaction evidence="1">
        <text>L-seryl-[protein] + ATP = 3-O-(5'-adenylyl)-L-seryl-[protein] + diphosphate</text>
        <dbReference type="Rhea" id="RHEA:58120"/>
        <dbReference type="Rhea" id="RHEA-COMP:9863"/>
        <dbReference type="Rhea" id="RHEA-COMP:15073"/>
        <dbReference type="ChEBI" id="CHEBI:29999"/>
        <dbReference type="ChEBI" id="CHEBI:30616"/>
        <dbReference type="ChEBI" id="CHEBI:33019"/>
        <dbReference type="ChEBI" id="CHEBI:142516"/>
        <dbReference type="EC" id="2.7.7.108"/>
    </reaction>
</comment>
<comment type="catalytic activity">
    <reaction evidence="1">
        <text>L-threonyl-[protein] + ATP = 3-O-(5'-adenylyl)-L-threonyl-[protein] + diphosphate</text>
        <dbReference type="Rhea" id="RHEA:54292"/>
        <dbReference type="Rhea" id="RHEA-COMP:11060"/>
        <dbReference type="Rhea" id="RHEA-COMP:13847"/>
        <dbReference type="ChEBI" id="CHEBI:30013"/>
        <dbReference type="ChEBI" id="CHEBI:30616"/>
        <dbReference type="ChEBI" id="CHEBI:33019"/>
        <dbReference type="ChEBI" id="CHEBI:138113"/>
        <dbReference type="EC" id="2.7.7.108"/>
    </reaction>
</comment>
<comment type="catalytic activity">
    <reaction evidence="1">
        <text>L-tyrosyl-[protein] + ATP = O-(5'-adenylyl)-L-tyrosyl-[protein] + diphosphate</text>
        <dbReference type="Rhea" id="RHEA:54288"/>
        <dbReference type="Rhea" id="RHEA-COMP:10136"/>
        <dbReference type="Rhea" id="RHEA-COMP:13846"/>
        <dbReference type="ChEBI" id="CHEBI:30616"/>
        <dbReference type="ChEBI" id="CHEBI:33019"/>
        <dbReference type="ChEBI" id="CHEBI:46858"/>
        <dbReference type="ChEBI" id="CHEBI:83624"/>
        <dbReference type="EC" id="2.7.7.108"/>
    </reaction>
</comment>
<comment type="catalytic activity">
    <reaction evidence="1">
        <text>L-histidyl-[protein] + UTP = N(tele)-(5'-uridylyl)-L-histidyl-[protein] + diphosphate</text>
        <dbReference type="Rhea" id="RHEA:83891"/>
        <dbReference type="Rhea" id="RHEA-COMP:9745"/>
        <dbReference type="Rhea" id="RHEA-COMP:20239"/>
        <dbReference type="ChEBI" id="CHEBI:29979"/>
        <dbReference type="ChEBI" id="CHEBI:33019"/>
        <dbReference type="ChEBI" id="CHEBI:46398"/>
        <dbReference type="ChEBI" id="CHEBI:233474"/>
    </reaction>
</comment>
<comment type="catalytic activity">
    <reaction evidence="1">
        <text>L-seryl-[protein] + UTP = O-(5'-uridylyl)-L-seryl-[protein] + diphosphate</text>
        <dbReference type="Rhea" id="RHEA:64604"/>
        <dbReference type="Rhea" id="RHEA-COMP:9863"/>
        <dbReference type="Rhea" id="RHEA-COMP:16635"/>
        <dbReference type="ChEBI" id="CHEBI:29999"/>
        <dbReference type="ChEBI" id="CHEBI:33019"/>
        <dbReference type="ChEBI" id="CHEBI:46398"/>
        <dbReference type="ChEBI" id="CHEBI:156051"/>
    </reaction>
</comment>
<comment type="catalytic activity">
    <reaction evidence="1">
        <text>L-tyrosyl-[protein] + UTP = O-(5'-uridylyl)-L-tyrosyl-[protein] + diphosphate</text>
        <dbReference type="Rhea" id="RHEA:83887"/>
        <dbReference type="Rhea" id="RHEA-COMP:10136"/>
        <dbReference type="Rhea" id="RHEA-COMP:20238"/>
        <dbReference type="ChEBI" id="CHEBI:33019"/>
        <dbReference type="ChEBI" id="CHEBI:46398"/>
        <dbReference type="ChEBI" id="CHEBI:46858"/>
        <dbReference type="ChEBI" id="CHEBI:90602"/>
    </reaction>
</comment>
<comment type="cofactor">
    <cofactor evidence="1">
        <name>Mg(2+)</name>
        <dbReference type="ChEBI" id="CHEBI:18420"/>
    </cofactor>
    <cofactor evidence="1">
        <name>Mn(2+)</name>
        <dbReference type="ChEBI" id="CHEBI:29035"/>
    </cofactor>
</comment>
<comment type="similarity">
    <text evidence="1">Belongs to the SELO family.</text>
</comment>
<sequence>MKFKQDFFTQLPEFYSQVYPQGISNPHWLAWSDDAAALIGLHQPTDELLQGLSGNAAVEGASYYAQVYSGHQFGGYTPRLGDGRSIILGEAIGPNGAWDVALKGGGPTPYSRHGDGRAVMRSAVREFLVSEALHHLGVPTTRALAVIGSDMPVWRESQETAAITVRLARSHIRFGHFEFFSHSERGQADKLTQLLNFTLKQHYPHLSCDPAGYKAWFLQVVQDSAKMIAHWQAIGFAHGVMNTDNMSILGDSFDFGPFAFLDTFQEDFICNHSDPDGRYAFGQQPGIGLWNLQRLAQALTPVIASDDLIAALNQYQHALVQHYLALMRAKLGLVQQADSSAEQDQQDLELIGRFTVLMEKNQLDYSHTWRRFGQLDPSSLHSSLRDDFIDLNEFDAWYQVYQARLGKVTDVEAWQQQCNRVNPKYILRNYLAQEAIIAVDEGNLAQLQRLHQVLRQPFTEQIEHEELAKRPPDWGQGLIMSCSS</sequence>
<protein>
    <recommendedName>
        <fullName evidence="1">Protein nucleotidyltransferase YdiU</fullName>
        <ecNumber evidence="1">2.7.7.-</ecNumber>
    </recommendedName>
    <alternativeName>
        <fullName evidence="1">Protein adenylyltransferase YdiU</fullName>
        <ecNumber evidence="1">2.7.7.108</ecNumber>
    </alternativeName>
    <alternativeName>
        <fullName evidence="1">Protein uridylyltransferase YdiU</fullName>
        <ecNumber evidence="1">2.7.7.-</ecNumber>
    </alternativeName>
</protein>
<keyword id="KW-0067">ATP-binding</keyword>
<keyword id="KW-0460">Magnesium</keyword>
<keyword id="KW-0464">Manganese</keyword>
<keyword id="KW-0479">Metal-binding</keyword>
<keyword id="KW-0547">Nucleotide-binding</keyword>
<keyword id="KW-0548">Nucleotidyltransferase</keyword>
<keyword id="KW-1185">Reference proteome</keyword>
<keyword id="KW-0808">Transferase</keyword>
<reference key="1">
    <citation type="journal article" date="2002" name="Nat. Biotechnol.">
        <title>Genome sequence of the dissimilatory metal ion-reducing bacterium Shewanella oneidensis.</title>
        <authorList>
            <person name="Heidelberg J.F."/>
            <person name="Paulsen I.T."/>
            <person name="Nelson K.E."/>
            <person name="Gaidos E.J."/>
            <person name="Nelson W.C."/>
            <person name="Read T.D."/>
            <person name="Eisen J.A."/>
            <person name="Seshadri R."/>
            <person name="Ward N.L."/>
            <person name="Methe B.A."/>
            <person name="Clayton R.A."/>
            <person name="Meyer T."/>
            <person name="Tsapin A."/>
            <person name="Scott J."/>
            <person name="Beanan M.J."/>
            <person name="Brinkac L.M."/>
            <person name="Daugherty S.C."/>
            <person name="DeBoy R.T."/>
            <person name="Dodson R.J."/>
            <person name="Durkin A.S."/>
            <person name="Haft D.H."/>
            <person name="Kolonay J.F."/>
            <person name="Madupu R."/>
            <person name="Peterson J.D."/>
            <person name="Umayam L.A."/>
            <person name="White O."/>
            <person name="Wolf A.M."/>
            <person name="Vamathevan J.J."/>
            <person name="Weidman J.F."/>
            <person name="Impraim M."/>
            <person name="Lee K."/>
            <person name="Berry K.J."/>
            <person name="Lee C."/>
            <person name="Mueller J."/>
            <person name="Khouri H.M."/>
            <person name="Gill J."/>
            <person name="Utterback T.R."/>
            <person name="McDonald L.A."/>
            <person name="Feldblyum T.V."/>
            <person name="Smith H.O."/>
            <person name="Venter J.C."/>
            <person name="Nealson K.H."/>
            <person name="Fraser C.M."/>
        </authorList>
    </citation>
    <scope>NUCLEOTIDE SEQUENCE [LARGE SCALE GENOMIC DNA]</scope>
    <source>
        <strain>ATCC 700550 / JCM 31522 / CIP 106686 / LMG 19005 / NCIMB 14063 / MR-1</strain>
    </source>
</reference>
<proteinExistence type="inferred from homology"/>
<accession>Q8EJX6</accession>
<dbReference type="EC" id="2.7.7.-" evidence="1"/>
<dbReference type="EC" id="2.7.7.108" evidence="1"/>
<dbReference type="EMBL" id="AE014299">
    <property type="protein sequence ID" value="AAN53415.1"/>
    <property type="molecule type" value="Genomic_DNA"/>
</dbReference>
<dbReference type="RefSeq" id="NP_715970.1">
    <property type="nucleotide sequence ID" value="NC_004347.2"/>
</dbReference>
<dbReference type="RefSeq" id="WP_011070695.1">
    <property type="nucleotide sequence ID" value="NC_004347.2"/>
</dbReference>
<dbReference type="SMR" id="Q8EJX6"/>
<dbReference type="STRING" id="211586.SO_0330"/>
<dbReference type="PaxDb" id="211586-SO_0330"/>
<dbReference type="KEGG" id="son:SO_0330"/>
<dbReference type="PATRIC" id="fig|211586.12.peg.320"/>
<dbReference type="eggNOG" id="COG0397">
    <property type="taxonomic scope" value="Bacteria"/>
</dbReference>
<dbReference type="HOGENOM" id="CLU_010245_4_1_6"/>
<dbReference type="OrthoDB" id="9776281at2"/>
<dbReference type="PhylomeDB" id="Q8EJX6"/>
<dbReference type="BioCyc" id="SONE211586:G1GMP-315-MONOMER"/>
<dbReference type="Proteomes" id="UP000008186">
    <property type="component" value="Chromosome"/>
</dbReference>
<dbReference type="GO" id="GO:0070733">
    <property type="term" value="F:AMPylase activity"/>
    <property type="evidence" value="ECO:0000318"/>
    <property type="project" value="GO_Central"/>
</dbReference>
<dbReference type="GO" id="GO:0005524">
    <property type="term" value="F:ATP binding"/>
    <property type="evidence" value="ECO:0007669"/>
    <property type="project" value="UniProtKB-UniRule"/>
</dbReference>
<dbReference type="GO" id="GO:0000287">
    <property type="term" value="F:magnesium ion binding"/>
    <property type="evidence" value="ECO:0007669"/>
    <property type="project" value="UniProtKB-UniRule"/>
</dbReference>
<dbReference type="HAMAP" id="MF_00692">
    <property type="entry name" value="YdiU_SelO"/>
    <property type="match status" value="1"/>
</dbReference>
<dbReference type="InterPro" id="IPR003846">
    <property type="entry name" value="SelO"/>
</dbReference>
<dbReference type="NCBIfam" id="NF000658">
    <property type="entry name" value="PRK00029.1"/>
    <property type="match status" value="1"/>
</dbReference>
<dbReference type="PANTHER" id="PTHR32057">
    <property type="entry name" value="PROTEIN ADENYLYLTRANSFERASE SELO, MITOCHONDRIAL"/>
    <property type="match status" value="1"/>
</dbReference>
<dbReference type="PANTHER" id="PTHR32057:SF14">
    <property type="entry name" value="PROTEIN ADENYLYLTRANSFERASE SELO, MITOCHONDRIAL"/>
    <property type="match status" value="1"/>
</dbReference>
<dbReference type="Pfam" id="PF02696">
    <property type="entry name" value="SelO"/>
    <property type="match status" value="1"/>
</dbReference>
<organism>
    <name type="scientific">Shewanella oneidensis (strain ATCC 700550 / JCM 31522 / CIP 106686 / LMG 19005 / NCIMB 14063 / MR-1)</name>
    <dbReference type="NCBI Taxonomy" id="211586"/>
    <lineage>
        <taxon>Bacteria</taxon>
        <taxon>Pseudomonadati</taxon>
        <taxon>Pseudomonadota</taxon>
        <taxon>Gammaproteobacteria</taxon>
        <taxon>Alteromonadales</taxon>
        <taxon>Shewanellaceae</taxon>
        <taxon>Shewanella</taxon>
    </lineage>
</organism>